<comment type="function">
    <text evidence="3 5">Strong platelet aggregation inhibitor. Binds specifically to platelet glycoprotein Ibalpha (GP1BA) with high affinity and inhibits vWF-dependent platelet aggregation (PubMed:7599152). Has also been observed to induce small agglutinates in washed platelets by binding to GPIb (PubMed:10688335).</text>
</comment>
<comment type="subunit">
    <text evidence="2">Tetramer of heterodimers of alpha and beta subunits (alphabeta)(4); disulfide-linked.</text>
</comment>
<comment type="subcellular location">
    <subcellularLocation>
        <location>Secreted</location>
    </subcellularLocation>
</comment>
<comment type="tissue specificity">
    <text>Expressed by the venom gland.</text>
</comment>
<comment type="miscellaneous">
    <text evidence="7">Negative results: has no effect on ADP- and collagen-induced platelet aggregation in platelet rich plasma.</text>
</comment>
<comment type="similarity">
    <text evidence="6">Belongs to the snaclec family.</text>
</comment>
<evidence type="ECO:0000255" key="1">
    <source>
        <dbReference type="PROSITE-ProRule" id="PRU00040"/>
    </source>
</evidence>
<evidence type="ECO:0000269" key="2">
    <source>
    </source>
</evidence>
<evidence type="ECO:0000269" key="3">
    <source>
    </source>
</evidence>
<evidence type="ECO:0000269" key="4">
    <source>
    </source>
</evidence>
<evidence type="ECO:0000269" key="5">
    <source>
    </source>
</evidence>
<evidence type="ECO:0000305" key="6"/>
<evidence type="ECO:0000305" key="7">
    <source>
    </source>
</evidence>
<evidence type="ECO:0007829" key="8">
    <source>
        <dbReference type="PDB" id="1C3A"/>
    </source>
</evidence>
<dbReference type="EMBL" id="AY149341">
    <property type="protein sequence ID" value="AAN72438.1"/>
    <property type="molecule type" value="mRNA"/>
</dbReference>
<dbReference type="PIR" id="S55679">
    <property type="entry name" value="S55679"/>
</dbReference>
<dbReference type="PDB" id="1C3A">
    <property type="method" value="X-ray"/>
    <property type="resolution" value="2.50 A"/>
    <property type="chains" value="A=24-158"/>
</dbReference>
<dbReference type="PDBsum" id="1C3A"/>
<dbReference type="SMR" id="Q8AV97"/>
<dbReference type="EvolutionaryTrace" id="Q8AV97"/>
<dbReference type="GO" id="GO:0005576">
    <property type="term" value="C:extracellular region"/>
    <property type="evidence" value="ECO:0007669"/>
    <property type="project" value="UniProtKB-SubCell"/>
</dbReference>
<dbReference type="GO" id="GO:0090729">
    <property type="term" value="F:toxin activity"/>
    <property type="evidence" value="ECO:0007669"/>
    <property type="project" value="UniProtKB-KW"/>
</dbReference>
<dbReference type="FunFam" id="3.10.100.10:FF:000087">
    <property type="entry name" value="Snaclec rhodocetin subunit delta"/>
    <property type="match status" value="1"/>
</dbReference>
<dbReference type="Gene3D" id="3.10.100.10">
    <property type="entry name" value="Mannose-Binding Protein A, subunit A"/>
    <property type="match status" value="1"/>
</dbReference>
<dbReference type="InterPro" id="IPR001304">
    <property type="entry name" value="C-type_lectin-like"/>
</dbReference>
<dbReference type="InterPro" id="IPR016186">
    <property type="entry name" value="C-type_lectin-like/link_sf"/>
</dbReference>
<dbReference type="InterPro" id="IPR050111">
    <property type="entry name" value="C-type_lectin/snaclec_domain"/>
</dbReference>
<dbReference type="InterPro" id="IPR018378">
    <property type="entry name" value="C-type_lectin_CS"/>
</dbReference>
<dbReference type="InterPro" id="IPR016187">
    <property type="entry name" value="CTDL_fold"/>
</dbReference>
<dbReference type="PANTHER" id="PTHR22803">
    <property type="entry name" value="MANNOSE, PHOSPHOLIPASE, LECTIN RECEPTOR RELATED"/>
    <property type="match status" value="1"/>
</dbReference>
<dbReference type="Pfam" id="PF00059">
    <property type="entry name" value="Lectin_C"/>
    <property type="match status" value="1"/>
</dbReference>
<dbReference type="PRINTS" id="PR01504">
    <property type="entry name" value="PNCREATITSAP"/>
</dbReference>
<dbReference type="SMART" id="SM00034">
    <property type="entry name" value="CLECT"/>
    <property type="match status" value="1"/>
</dbReference>
<dbReference type="SUPFAM" id="SSF56436">
    <property type="entry name" value="C-type lectin-like"/>
    <property type="match status" value="1"/>
</dbReference>
<dbReference type="PROSITE" id="PS00615">
    <property type="entry name" value="C_TYPE_LECTIN_1"/>
    <property type="match status" value="1"/>
</dbReference>
<dbReference type="PROSITE" id="PS50041">
    <property type="entry name" value="C_TYPE_LECTIN_2"/>
    <property type="match status" value="1"/>
</dbReference>
<sequence>MERLIFVSFGLLVVILSLSGTGADFDCIPGWSAYDRYCYQAFSKPKNWEDAESFCEEGVKTSHLVSIESSGEGDFVAQLVAEKIKTSFQYVWIGLRIQNKEQQCRSEWSDASSVNYENLVKQFSKKCYALKKGTELRTWFNVYCGTENPFVCKYTPEC</sequence>
<feature type="signal peptide" evidence="4 5">
    <location>
        <begin position="1"/>
        <end position="23"/>
    </location>
</feature>
<feature type="chain" id="PRO_0000355293" description="Snaclec flavocetin-A subunit alpha">
    <location>
        <begin position="24"/>
        <end position="158"/>
    </location>
</feature>
<feature type="domain" description="C-type lectin" evidence="1">
    <location>
        <begin position="34"/>
        <end position="153"/>
    </location>
</feature>
<feature type="disulfide bond" evidence="1 2">
    <location>
        <begin position="27"/>
        <end position="38"/>
    </location>
</feature>
<feature type="disulfide bond" evidence="1 2">
    <location>
        <begin position="55"/>
        <end position="152"/>
    </location>
</feature>
<feature type="disulfide bond" description="Interchain (with C-100 in subunit beta of heterodimeric partner)" evidence="1 2">
    <location>
        <position position="104"/>
    </location>
</feature>
<feature type="disulfide bond" evidence="1 2">
    <location>
        <begin position="127"/>
        <end position="144"/>
    </location>
</feature>
<feature type="disulfide bond" description="Interchain (with C-26 in subunit beta of tetrameric partner)" evidence="1 2">
    <location>
        <position position="158"/>
    </location>
</feature>
<feature type="sequence conflict" description="In Ref. 2; AA sequence." evidence="6" ref="2">
    <original>S</original>
    <variation>E</variation>
    <location>
        <position position="53"/>
    </location>
</feature>
<feature type="sequence conflict" description="In Ref. 2; AA sequence." evidence="6" ref="2">
    <original>E</original>
    <variation>M</variation>
    <location>
        <position position="56"/>
    </location>
</feature>
<feature type="strand" evidence="8">
    <location>
        <begin position="32"/>
        <end position="34"/>
    </location>
</feature>
<feature type="strand" evidence="8">
    <location>
        <begin position="37"/>
        <end position="46"/>
    </location>
</feature>
<feature type="helix" evidence="8">
    <location>
        <begin position="48"/>
        <end position="58"/>
    </location>
</feature>
<feature type="helix" evidence="8">
    <location>
        <begin position="70"/>
        <end position="83"/>
    </location>
</feature>
<feature type="strand" evidence="8">
    <location>
        <begin position="89"/>
        <end position="97"/>
    </location>
</feature>
<feature type="strand" evidence="8">
    <location>
        <begin position="101"/>
        <end position="103"/>
    </location>
</feature>
<feature type="helix" evidence="8">
    <location>
        <begin position="121"/>
        <end position="123"/>
    </location>
</feature>
<feature type="strand" evidence="8">
    <location>
        <begin position="127"/>
        <end position="131"/>
    </location>
</feature>
<feature type="strand" evidence="8">
    <location>
        <begin position="138"/>
        <end position="142"/>
    </location>
</feature>
<feature type="strand" evidence="8">
    <location>
        <begin position="148"/>
        <end position="154"/>
    </location>
</feature>
<keyword id="KW-0002">3D-structure</keyword>
<keyword id="KW-0903">Direct protein sequencing</keyword>
<keyword id="KW-1015">Disulfide bond</keyword>
<keyword id="KW-1199">Hemostasis impairing toxin</keyword>
<keyword id="KW-1201">Platelet aggregation inhibiting toxin</keyword>
<keyword id="KW-0964">Secreted</keyword>
<keyword id="KW-0732">Signal</keyword>
<keyword id="KW-0800">Toxin</keyword>
<protein>
    <recommendedName>
        <fullName>Snaclec flavocetin-A subunit alpha</fullName>
        <shortName>FL-A subunit alpha</shortName>
    </recommendedName>
</protein>
<name>SLAA_PROFL</name>
<proteinExistence type="evidence at protein level"/>
<accession>Q8AV97</accession>
<accession>Q9PRT2</accession>
<reference key="1">
    <citation type="journal article" date="2000" name="Thromb. Res.">
        <title>Molecular cloning of glycoprotein Ib-binding protein, flavocetin-A, which inhibits platelet aggregation.</title>
        <authorList>
            <person name="Shin Y."/>
            <person name="Okuyama I."/>
            <person name="Hasegawa J."/>
            <person name="Morita T."/>
        </authorList>
    </citation>
    <scope>NUCLEOTIDE SEQUENCE [MRNA]</scope>
    <scope>PROTEIN SEQUENCE OF 24-46; 47-60; 101-121; 127-131; 132-153 AND 154-158</scope>
    <source>
        <tissue>Venom</tissue>
        <tissue>Venom gland</tissue>
    </source>
</reference>
<reference key="2">
    <citation type="journal article" date="1995" name="Biochim. Biophys. Acta">
        <title>Flavocetin-A and -B, two high molecular mass glycoprotein Ib binding proteins with high affinity purified from Trimeresurus flavoviridis venom, inhibit platelet aggregation at high shear stress.</title>
        <authorList>
            <person name="Taniuchi Y."/>
            <person name="Kawasaki T."/>
            <person name="Fujimura Y."/>
            <person name="Suzuki M."/>
            <person name="Titani K."/>
            <person name="Sakai Y."/>
            <person name="Kaku S."/>
            <person name="Hisamichi N."/>
            <person name="Satoh N."/>
            <person name="Takenaka T."/>
        </authorList>
    </citation>
    <scope>PROTEIN SEQUENCE OF 24-57</scope>
    <scope>FUNCTION</scope>
    <source>
        <tissue>Venom</tissue>
    </source>
</reference>
<reference key="3">
    <citation type="journal article" date="2000" name="Thromb. Res.">
        <title>The high molecular mass, glycoprotein Ib-binding protein flavocetin-A induces only small platelet aggregates in vitro.</title>
        <authorList>
            <person name="Taniuchi Y."/>
            <person name="Kawasaki T."/>
            <person name="Fujimura Y."/>
        </authorList>
    </citation>
    <scope>FUNCTION</scope>
</reference>
<reference key="4">
    <citation type="journal article" date="1999" name="Acta Crystallogr. D">
        <title>Crystallization and preliminary x-ray studies of flavocetin-A, a platelet glycoprotein Ib-binding protein from the habu snake venom.</title>
        <authorList>
            <person name="Fukuda K."/>
            <person name="Mizuno H."/>
            <person name="Atoda H."/>
            <person name="Morita T."/>
        </authorList>
    </citation>
    <scope>CRYSTALLIZATION</scope>
</reference>
<reference key="5">
    <citation type="journal article" date="2000" name="Biochemistry">
        <title>Crystal structure of flavocetin-A, a platelet glycoprotein Ib-binding protein, reveals a novel cyclic tetramer of C-type lectin-like heterodimers.</title>
        <authorList>
            <person name="Fukuda K."/>
            <person name="Mizuno H."/>
            <person name="Atoda H."/>
            <person name="Morita T."/>
        </authorList>
    </citation>
    <scope>X-RAY CRYSTALLOGRAPHY (2.5 ANGSTROMS) OF 24-158</scope>
    <scope>SUBUNIT</scope>
    <scope>DISULFIDE BONDS</scope>
</reference>
<organism>
    <name type="scientific">Protobothrops flavoviridis</name>
    <name type="common">Habu</name>
    <name type="synonym">Trimeresurus flavoviridis</name>
    <dbReference type="NCBI Taxonomy" id="88087"/>
    <lineage>
        <taxon>Eukaryota</taxon>
        <taxon>Metazoa</taxon>
        <taxon>Chordata</taxon>
        <taxon>Craniata</taxon>
        <taxon>Vertebrata</taxon>
        <taxon>Euteleostomi</taxon>
        <taxon>Lepidosauria</taxon>
        <taxon>Squamata</taxon>
        <taxon>Bifurcata</taxon>
        <taxon>Unidentata</taxon>
        <taxon>Episquamata</taxon>
        <taxon>Toxicofera</taxon>
        <taxon>Serpentes</taxon>
        <taxon>Colubroidea</taxon>
        <taxon>Viperidae</taxon>
        <taxon>Crotalinae</taxon>
        <taxon>Protobothrops</taxon>
    </lineage>
</organism>